<gene>
    <name type="primary">yqcC</name>
    <name type="ordered locus">b2792</name>
    <name type="ordered locus">JW2763</name>
</gene>
<comment type="similarity">
    <text evidence="1">To the N-terminal of E.carotovora exoenzyme regulation regulon ORF1. The C-terminal part is colinear with YqcB.</text>
</comment>
<comment type="similarity">
    <text evidence="1">To H.influenzae HI_1436.</text>
</comment>
<name>YQCC_ECOLI</name>
<accession>Q46919</accession>
<accession>Q2MA42</accession>
<protein>
    <recommendedName>
        <fullName>Uncharacterized protein YqcC</fullName>
    </recommendedName>
</protein>
<feature type="chain" id="PRO_0000169326" description="Uncharacterized protein YqcC">
    <location>
        <begin position="1"/>
        <end position="109"/>
    </location>
</feature>
<feature type="helix" evidence="2">
    <location>
        <begin position="3"/>
        <end position="20"/>
    </location>
</feature>
<feature type="helix" evidence="2">
    <location>
        <begin position="31"/>
        <end position="33"/>
    </location>
</feature>
<feature type="turn" evidence="2">
    <location>
        <begin position="34"/>
        <end position="36"/>
    </location>
</feature>
<feature type="turn" evidence="2">
    <location>
        <begin position="42"/>
        <end position="44"/>
    </location>
</feature>
<feature type="helix" evidence="2">
    <location>
        <begin position="48"/>
        <end position="51"/>
    </location>
</feature>
<feature type="turn" evidence="2">
    <location>
        <begin position="52"/>
        <end position="54"/>
    </location>
</feature>
<feature type="helix" evidence="2">
    <location>
        <begin position="55"/>
        <end position="64"/>
    </location>
</feature>
<feature type="helix" evidence="2">
    <location>
        <begin position="76"/>
        <end position="82"/>
    </location>
</feature>
<feature type="helix" evidence="2">
    <location>
        <begin position="90"/>
        <end position="104"/>
    </location>
</feature>
<evidence type="ECO:0000305" key="1"/>
<evidence type="ECO:0007829" key="2">
    <source>
        <dbReference type="PDB" id="2HGK"/>
    </source>
</evidence>
<sequence>MTTHDRVRLQLQALEALLREHQHWRNDEPQPHQFNSTQPFFMDTMEPLEWLQWVLIPRMHDLLDNKQPLPGAFAVAPYYEMALATDHPQRALILAELEKLDALFADDAS</sequence>
<dbReference type="EMBL" id="U29581">
    <property type="protein sequence ID" value="AAB40442.1"/>
    <property type="molecule type" value="Genomic_DNA"/>
</dbReference>
<dbReference type="EMBL" id="U00096">
    <property type="protein sequence ID" value="AAC75834.1"/>
    <property type="molecule type" value="Genomic_DNA"/>
</dbReference>
<dbReference type="EMBL" id="AP009048">
    <property type="protein sequence ID" value="BAE76864.1"/>
    <property type="molecule type" value="Genomic_DNA"/>
</dbReference>
<dbReference type="PIR" id="D65061">
    <property type="entry name" value="D65061"/>
</dbReference>
<dbReference type="RefSeq" id="NP_417272.1">
    <property type="nucleotide sequence ID" value="NC_000913.3"/>
</dbReference>
<dbReference type="RefSeq" id="WP_000206990.1">
    <property type="nucleotide sequence ID" value="NZ_STEB01000030.1"/>
</dbReference>
<dbReference type="PDB" id="2HGK">
    <property type="method" value="NMR"/>
    <property type="chains" value="A=1-109"/>
</dbReference>
<dbReference type="PDBsum" id="2HGK"/>
<dbReference type="BMRB" id="Q46919"/>
<dbReference type="SMR" id="Q46919"/>
<dbReference type="BioGRID" id="4262249">
    <property type="interactions" value="17"/>
</dbReference>
<dbReference type="BioGRID" id="850388">
    <property type="interactions" value="1"/>
</dbReference>
<dbReference type="FunCoup" id="Q46919">
    <property type="interactions" value="35"/>
</dbReference>
<dbReference type="IntAct" id="Q46919">
    <property type="interactions" value="1"/>
</dbReference>
<dbReference type="STRING" id="511145.b2792"/>
<dbReference type="jPOST" id="Q46919"/>
<dbReference type="PaxDb" id="511145-b2792"/>
<dbReference type="EnsemblBacteria" id="AAC75834">
    <property type="protein sequence ID" value="AAC75834"/>
    <property type="gene ID" value="b2792"/>
</dbReference>
<dbReference type="GeneID" id="946027"/>
<dbReference type="KEGG" id="ecj:JW2763"/>
<dbReference type="KEGG" id="eco:b2792"/>
<dbReference type="KEGG" id="ecoc:C3026_15350"/>
<dbReference type="PATRIC" id="fig|511145.12.peg.2892"/>
<dbReference type="EchoBASE" id="EB2964"/>
<dbReference type="eggNOG" id="COG3098">
    <property type="taxonomic scope" value="Bacteria"/>
</dbReference>
<dbReference type="HOGENOM" id="CLU_130358_0_0_6"/>
<dbReference type="InParanoid" id="Q46919"/>
<dbReference type="OMA" id="LQWIFIP"/>
<dbReference type="OrthoDB" id="8794567at2"/>
<dbReference type="PhylomeDB" id="Q46919"/>
<dbReference type="BioCyc" id="EcoCyc:G7450-MONOMER"/>
<dbReference type="EvolutionaryTrace" id="Q46919"/>
<dbReference type="PRO" id="PR:Q46919"/>
<dbReference type="Proteomes" id="UP000000625">
    <property type="component" value="Chromosome"/>
</dbReference>
<dbReference type="GO" id="GO:0044010">
    <property type="term" value="P:single-species biofilm formation"/>
    <property type="evidence" value="ECO:0000315"/>
    <property type="project" value="EcoCyc"/>
</dbReference>
<dbReference type="FunFam" id="1.20.1440.40:FF:000001">
    <property type="entry name" value="DUF446 domain protein"/>
    <property type="match status" value="1"/>
</dbReference>
<dbReference type="Gene3D" id="1.20.1440.40">
    <property type="entry name" value="YqcC-like"/>
    <property type="match status" value="1"/>
</dbReference>
<dbReference type="InterPro" id="IPR007384">
    <property type="entry name" value="UCP006257"/>
</dbReference>
<dbReference type="InterPro" id="IPR023376">
    <property type="entry name" value="YqcC-like_dom"/>
</dbReference>
<dbReference type="InterPro" id="IPR036814">
    <property type="entry name" value="YqcC-like_sf"/>
</dbReference>
<dbReference type="PANTHER" id="PTHR39586:SF1">
    <property type="entry name" value="CYTOPLASMIC PROTEIN"/>
    <property type="match status" value="1"/>
</dbReference>
<dbReference type="PANTHER" id="PTHR39586">
    <property type="entry name" value="CYTOPLASMIC PROTEIN-RELATED"/>
    <property type="match status" value="1"/>
</dbReference>
<dbReference type="Pfam" id="PF04287">
    <property type="entry name" value="DUF446"/>
    <property type="match status" value="1"/>
</dbReference>
<dbReference type="PIRSF" id="PIRSF006257">
    <property type="entry name" value="UCP006257"/>
    <property type="match status" value="1"/>
</dbReference>
<dbReference type="SUPFAM" id="SSF158452">
    <property type="entry name" value="YqcC-like"/>
    <property type="match status" value="1"/>
</dbReference>
<keyword id="KW-0002">3D-structure</keyword>
<keyword id="KW-1185">Reference proteome</keyword>
<organism>
    <name type="scientific">Escherichia coli (strain K12)</name>
    <dbReference type="NCBI Taxonomy" id="83333"/>
    <lineage>
        <taxon>Bacteria</taxon>
        <taxon>Pseudomonadati</taxon>
        <taxon>Pseudomonadota</taxon>
        <taxon>Gammaproteobacteria</taxon>
        <taxon>Enterobacterales</taxon>
        <taxon>Enterobacteriaceae</taxon>
        <taxon>Escherichia</taxon>
    </lineage>
</organism>
<reference key="1">
    <citation type="journal article" date="1997" name="Science">
        <title>The complete genome sequence of Escherichia coli K-12.</title>
        <authorList>
            <person name="Blattner F.R."/>
            <person name="Plunkett G. III"/>
            <person name="Bloch C.A."/>
            <person name="Perna N.T."/>
            <person name="Burland V."/>
            <person name="Riley M."/>
            <person name="Collado-Vides J."/>
            <person name="Glasner J.D."/>
            <person name="Rode C.K."/>
            <person name="Mayhew G.F."/>
            <person name="Gregor J."/>
            <person name="Davis N.W."/>
            <person name="Kirkpatrick H.A."/>
            <person name="Goeden M.A."/>
            <person name="Rose D.J."/>
            <person name="Mau B."/>
            <person name="Shao Y."/>
        </authorList>
    </citation>
    <scope>NUCLEOTIDE SEQUENCE [LARGE SCALE GENOMIC DNA]</scope>
    <source>
        <strain>K12 / MG1655 / ATCC 47076</strain>
    </source>
</reference>
<reference key="2">
    <citation type="journal article" date="2006" name="Mol. Syst. Biol.">
        <title>Highly accurate genome sequences of Escherichia coli K-12 strains MG1655 and W3110.</title>
        <authorList>
            <person name="Hayashi K."/>
            <person name="Morooka N."/>
            <person name="Yamamoto Y."/>
            <person name="Fujita K."/>
            <person name="Isono K."/>
            <person name="Choi S."/>
            <person name="Ohtsubo E."/>
            <person name="Baba T."/>
            <person name="Wanner B.L."/>
            <person name="Mori H."/>
            <person name="Horiuchi T."/>
        </authorList>
    </citation>
    <scope>NUCLEOTIDE SEQUENCE [LARGE SCALE GENOMIC DNA]</scope>
    <source>
        <strain>K12 / W3110 / ATCC 27325 / DSM 5911</strain>
    </source>
</reference>
<reference key="3">
    <citation type="submission" date="2006-06" db="PDB data bank">
        <title>NMR structure of protein yqcC from E.coli.</title>
        <authorList>
            <consortium name="Northeast structural genomics consortium (NESG)"/>
        </authorList>
    </citation>
    <scope>STRUCTURE BY NMR</scope>
</reference>
<proteinExistence type="evidence at protein level"/>